<proteinExistence type="evidence at transcript level"/>
<name>ERI2_MOUSE</name>
<evidence type="ECO:0000250" key="1"/>
<evidence type="ECO:0000255" key="2"/>
<evidence type="ECO:0000255" key="3">
    <source>
        <dbReference type="PROSITE-ProRule" id="PRU01343"/>
    </source>
</evidence>
<evidence type="ECO:0000256" key="4">
    <source>
        <dbReference type="SAM" id="MobiDB-lite"/>
    </source>
</evidence>
<evidence type="ECO:0000305" key="5"/>
<reference key="1">
    <citation type="journal article" date="2005" name="Science">
        <title>The transcriptional landscape of the mammalian genome.</title>
        <authorList>
            <person name="Carninci P."/>
            <person name="Kasukawa T."/>
            <person name="Katayama S."/>
            <person name="Gough J."/>
            <person name="Frith M.C."/>
            <person name="Maeda N."/>
            <person name="Oyama R."/>
            <person name="Ravasi T."/>
            <person name="Lenhard B."/>
            <person name="Wells C."/>
            <person name="Kodzius R."/>
            <person name="Shimokawa K."/>
            <person name="Bajic V.B."/>
            <person name="Brenner S.E."/>
            <person name="Batalov S."/>
            <person name="Forrest A.R."/>
            <person name="Zavolan M."/>
            <person name="Davis M.J."/>
            <person name="Wilming L.G."/>
            <person name="Aidinis V."/>
            <person name="Allen J.E."/>
            <person name="Ambesi-Impiombato A."/>
            <person name="Apweiler R."/>
            <person name="Aturaliya R.N."/>
            <person name="Bailey T.L."/>
            <person name="Bansal M."/>
            <person name="Baxter L."/>
            <person name="Beisel K.W."/>
            <person name="Bersano T."/>
            <person name="Bono H."/>
            <person name="Chalk A.M."/>
            <person name="Chiu K.P."/>
            <person name="Choudhary V."/>
            <person name="Christoffels A."/>
            <person name="Clutterbuck D.R."/>
            <person name="Crowe M.L."/>
            <person name="Dalla E."/>
            <person name="Dalrymple B.P."/>
            <person name="de Bono B."/>
            <person name="Della Gatta G."/>
            <person name="di Bernardo D."/>
            <person name="Down T."/>
            <person name="Engstrom P."/>
            <person name="Fagiolini M."/>
            <person name="Faulkner G."/>
            <person name="Fletcher C.F."/>
            <person name="Fukushima T."/>
            <person name="Furuno M."/>
            <person name="Futaki S."/>
            <person name="Gariboldi M."/>
            <person name="Georgii-Hemming P."/>
            <person name="Gingeras T.R."/>
            <person name="Gojobori T."/>
            <person name="Green R.E."/>
            <person name="Gustincich S."/>
            <person name="Harbers M."/>
            <person name="Hayashi Y."/>
            <person name="Hensch T.K."/>
            <person name="Hirokawa N."/>
            <person name="Hill D."/>
            <person name="Huminiecki L."/>
            <person name="Iacono M."/>
            <person name="Ikeo K."/>
            <person name="Iwama A."/>
            <person name="Ishikawa T."/>
            <person name="Jakt M."/>
            <person name="Kanapin A."/>
            <person name="Katoh M."/>
            <person name="Kawasawa Y."/>
            <person name="Kelso J."/>
            <person name="Kitamura H."/>
            <person name="Kitano H."/>
            <person name="Kollias G."/>
            <person name="Krishnan S.P."/>
            <person name="Kruger A."/>
            <person name="Kummerfeld S.K."/>
            <person name="Kurochkin I.V."/>
            <person name="Lareau L.F."/>
            <person name="Lazarevic D."/>
            <person name="Lipovich L."/>
            <person name="Liu J."/>
            <person name="Liuni S."/>
            <person name="McWilliam S."/>
            <person name="Madan Babu M."/>
            <person name="Madera M."/>
            <person name="Marchionni L."/>
            <person name="Matsuda H."/>
            <person name="Matsuzawa S."/>
            <person name="Miki H."/>
            <person name="Mignone F."/>
            <person name="Miyake S."/>
            <person name="Morris K."/>
            <person name="Mottagui-Tabar S."/>
            <person name="Mulder N."/>
            <person name="Nakano N."/>
            <person name="Nakauchi H."/>
            <person name="Ng P."/>
            <person name="Nilsson R."/>
            <person name="Nishiguchi S."/>
            <person name="Nishikawa S."/>
            <person name="Nori F."/>
            <person name="Ohara O."/>
            <person name="Okazaki Y."/>
            <person name="Orlando V."/>
            <person name="Pang K.C."/>
            <person name="Pavan W.J."/>
            <person name="Pavesi G."/>
            <person name="Pesole G."/>
            <person name="Petrovsky N."/>
            <person name="Piazza S."/>
            <person name="Reed J."/>
            <person name="Reid J.F."/>
            <person name="Ring B.Z."/>
            <person name="Ringwald M."/>
            <person name="Rost B."/>
            <person name="Ruan Y."/>
            <person name="Salzberg S.L."/>
            <person name="Sandelin A."/>
            <person name="Schneider C."/>
            <person name="Schoenbach C."/>
            <person name="Sekiguchi K."/>
            <person name="Semple C.A."/>
            <person name="Seno S."/>
            <person name="Sessa L."/>
            <person name="Sheng Y."/>
            <person name="Shibata Y."/>
            <person name="Shimada H."/>
            <person name="Shimada K."/>
            <person name="Silva D."/>
            <person name="Sinclair B."/>
            <person name="Sperling S."/>
            <person name="Stupka E."/>
            <person name="Sugiura K."/>
            <person name="Sultana R."/>
            <person name="Takenaka Y."/>
            <person name="Taki K."/>
            <person name="Tammoja K."/>
            <person name="Tan S.L."/>
            <person name="Tang S."/>
            <person name="Taylor M.S."/>
            <person name="Tegner J."/>
            <person name="Teichmann S.A."/>
            <person name="Ueda H.R."/>
            <person name="van Nimwegen E."/>
            <person name="Verardo R."/>
            <person name="Wei C.L."/>
            <person name="Yagi K."/>
            <person name="Yamanishi H."/>
            <person name="Zabarovsky E."/>
            <person name="Zhu S."/>
            <person name="Zimmer A."/>
            <person name="Hide W."/>
            <person name="Bult C."/>
            <person name="Grimmond S.M."/>
            <person name="Teasdale R.D."/>
            <person name="Liu E.T."/>
            <person name="Brusic V."/>
            <person name="Quackenbush J."/>
            <person name="Wahlestedt C."/>
            <person name="Mattick J.S."/>
            <person name="Hume D.A."/>
            <person name="Kai C."/>
            <person name="Sasaki D."/>
            <person name="Tomaru Y."/>
            <person name="Fukuda S."/>
            <person name="Kanamori-Katayama M."/>
            <person name="Suzuki M."/>
            <person name="Aoki J."/>
            <person name="Arakawa T."/>
            <person name="Iida J."/>
            <person name="Imamura K."/>
            <person name="Itoh M."/>
            <person name="Kato T."/>
            <person name="Kawaji H."/>
            <person name="Kawagashira N."/>
            <person name="Kawashima T."/>
            <person name="Kojima M."/>
            <person name="Kondo S."/>
            <person name="Konno H."/>
            <person name="Nakano K."/>
            <person name="Ninomiya N."/>
            <person name="Nishio T."/>
            <person name="Okada M."/>
            <person name="Plessy C."/>
            <person name="Shibata K."/>
            <person name="Shiraki T."/>
            <person name="Suzuki S."/>
            <person name="Tagami M."/>
            <person name="Waki K."/>
            <person name="Watahiki A."/>
            <person name="Okamura-Oho Y."/>
            <person name="Suzuki H."/>
            <person name="Kawai J."/>
            <person name="Hayashizaki Y."/>
        </authorList>
    </citation>
    <scope>NUCLEOTIDE SEQUENCE [LARGE SCALE MRNA]</scope>
    <source>
        <strain>C57BL/6J</strain>
        <tissue>Head</tissue>
        <tissue>Skin</tissue>
    </source>
</reference>
<reference key="2">
    <citation type="journal article" date="2004" name="Genome Res.">
        <title>The status, quality, and expansion of the NIH full-length cDNA project: the Mammalian Gene Collection (MGC).</title>
        <authorList>
            <consortium name="The MGC Project Team"/>
        </authorList>
    </citation>
    <scope>NUCLEOTIDE SEQUENCE [LARGE SCALE MRNA]</scope>
    <source>
        <strain>C57BL/6J</strain>
        <tissue>Eye</tissue>
    </source>
</reference>
<accession>Q5BKS4</accession>
<accession>Q3TUK9</accession>
<accession>Q8C133</accession>
<keyword id="KW-0269">Exonuclease</keyword>
<keyword id="KW-0378">Hydrolase</keyword>
<keyword id="KW-0460">Magnesium</keyword>
<keyword id="KW-0479">Metal-binding</keyword>
<keyword id="KW-0540">Nuclease</keyword>
<keyword id="KW-1185">Reference proteome</keyword>
<keyword id="KW-0862">Zinc</keyword>
<keyword id="KW-0863">Zinc-finger</keyword>
<gene>
    <name type="primary">Eri2</name>
    <name type="synonym">Exod1</name>
    <name type="synonym">Kiaa1504</name>
</gene>
<dbReference type="EC" id="3.1.-.-"/>
<dbReference type="EMBL" id="AK029056">
    <property type="protein sequence ID" value="BAC26269.1"/>
    <property type="molecule type" value="mRNA"/>
</dbReference>
<dbReference type="EMBL" id="AK135821">
    <property type="protein sequence ID" value="BAE22676.1"/>
    <property type="molecule type" value="mRNA"/>
</dbReference>
<dbReference type="EMBL" id="AK160698">
    <property type="protein sequence ID" value="BAE35962.1"/>
    <property type="molecule type" value="mRNA"/>
</dbReference>
<dbReference type="EMBL" id="AK165163">
    <property type="protein sequence ID" value="BAE38055.1"/>
    <property type="molecule type" value="mRNA"/>
</dbReference>
<dbReference type="EMBL" id="BC090961">
    <property type="protein sequence ID" value="AAH90961.1"/>
    <property type="molecule type" value="mRNA"/>
</dbReference>
<dbReference type="CCDS" id="CCDS40107.1"/>
<dbReference type="RefSeq" id="NP_081974.3">
    <property type="nucleotide sequence ID" value="NM_027698.5"/>
</dbReference>
<dbReference type="SMR" id="Q5BKS4"/>
<dbReference type="FunCoup" id="Q5BKS4">
    <property type="interactions" value="1786"/>
</dbReference>
<dbReference type="STRING" id="10090.ENSMUSP00000120547"/>
<dbReference type="GlyGen" id="Q5BKS4">
    <property type="glycosylation" value="1 site"/>
</dbReference>
<dbReference type="iPTMnet" id="Q5BKS4"/>
<dbReference type="PhosphoSitePlus" id="Q5BKS4"/>
<dbReference type="PaxDb" id="10090-ENSMUSP00000120547"/>
<dbReference type="ProteomicsDB" id="275780"/>
<dbReference type="Antibodypedia" id="25615">
    <property type="antibodies" value="109 antibodies from 18 providers"/>
</dbReference>
<dbReference type="DNASU" id="71151"/>
<dbReference type="Ensembl" id="ENSMUST00000150844.3">
    <property type="protein sequence ID" value="ENSMUSP00000120547.2"/>
    <property type="gene ID" value="ENSMUSG00000030929.18"/>
</dbReference>
<dbReference type="GeneID" id="71151"/>
<dbReference type="KEGG" id="mmu:71151"/>
<dbReference type="UCSC" id="uc009jlu.2">
    <property type="organism name" value="mouse"/>
</dbReference>
<dbReference type="AGR" id="MGI:1918401"/>
<dbReference type="CTD" id="112479"/>
<dbReference type="MGI" id="MGI:1918401">
    <property type="gene designation" value="Eri2"/>
</dbReference>
<dbReference type="VEuPathDB" id="HostDB:ENSMUSG00000030929"/>
<dbReference type="eggNOG" id="KOG0542">
    <property type="taxonomic scope" value="Eukaryota"/>
</dbReference>
<dbReference type="GeneTree" id="ENSGT00530000063205"/>
<dbReference type="HOGENOM" id="CLU_025844_0_0_1"/>
<dbReference type="InParanoid" id="Q5BKS4"/>
<dbReference type="OrthoDB" id="448399at2759"/>
<dbReference type="PhylomeDB" id="Q5BKS4"/>
<dbReference type="TreeFam" id="TF313449"/>
<dbReference type="BioGRID-ORCS" id="71151">
    <property type="hits" value="2 hits in 77 CRISPR screens"/>
</dbReference>
<dbReference type="ChiTaRS" id="Eri2">
    <property type="organism name" value="mouse"/>
</dbReference>
<dbReference type="PRO" id="PR:Q5BKS4"/>
<dbReference type="Proteomes" id="UP000000589">
    <property type="component" value="Chromosome 7"/>
</dbReference>
<dbReference type="RNAct" id="Q5BKS4">
    <property type="molecule type" value="protein"/>
</dbReference>
<dbReference type="Bgee" id="ENSMUSG00000030929">
    <property type="expression patterns" value="Expressed in metanephric proximal tubule and 225 other cell types or tissues"/>
</dbReference>
<dbReference type="ExpressionAtlas" id="Q5BKS4">
    <property type="expression patterns" value="baseline and differential"/>
</dbReference>
<dbReference type="GO" id="GO:0000175">
    <property type="term" value="F:3'-5'-RNA exonuclease activity"/>
    <property type="evidence" value="ECO:0007669"/>
    <property type="project" value="InterPro"/>
</dbReference>
<dbReference type="GO" id="GO:0003676">
    <property type="term" value="F:nucleic acid binding"/>
    <property type="evidence" value="ECO:0007669"/>
    <property type="project" value="InterPro"/>
</dbReference>
<dbReference type="GO" id="GO:0008270">
    <property type="term" value="F:zinc ion binding"/>
    <property type="evidence" value="ECO:0007669"/>
    <property type="project" value="UniProtKB-KW"/>
</dbReference>
<dbReference type="CDD" id="cd06133">
    <property type="entry name" value="ERI-1_3'hExo_like"/>
    <property type="match status" value="1"/>
</dbReference>
<dbReference type="FunFam" id="3.30.420.10:FF:000062">
    <property type="entry name" value="ERI1 exoribonuclease 2 isoform X1"/>
    <property type="match status" value="1"/>
</dbReference>
<dbReference type="Gene3D" id="3.30.420.10">
    <property type="entry name" value="Ribonuclease H-like superfamily/Ribonuclease H"/>
    <property type="match status" value="1"/>
</dbReference>
<dbReference type="InterPro" id="IPR051274">
    <property type="entry name" value="3-5_Exoribonuclease"/>
</dbReference>
<dbReference type="InterPro" id="IPR047201">
    <property type="entry name" value="ERI-1_3'hExo-like"/>
</dbReference>
<dbReference type="InterPro" id="IPR013520">
    <property type="entry name" value="Exonuclease_RNaseT/DNA_pol3"/>
</dbReference>
<dbReference type="InterPro" id="IPR012337">
    <property type="entry name" value="RNaseH-like_sf"/>
</dbReference>
<dbReference type="InterPro" id="IPR036397">
    <property type="entry name" value="RNaseH_sf"/>
</dbReference>
<dbReference type="InterPro" id="IPR010666">
    <property type="entry name" value="Znf_GRF"/>
</dbReference>
<dbReference type="PANTHER" id="PTHR23044">
    <property type="entry name" value="3'-5' EXONUCLEASE ERI1-RELATED"/>
    <property type="match status" value="1"/>
</dbReference>
<dbReference type="PANTHER" id="PTHR23044:SF61">
    <property type="entry name" value="3'-5' EXORIBONUCLEASE 1-RELATED"/>
    <property type="match status" value="1"/>
</dbReference>
<dbReference type="Pfam" id="PF00929">
    <property type="entry name" value="RNase_T"/>
    <property type="match status" value="1"/>
</dbReference>
<dbReference type="Pfam" id="PF06839">
    <property type="entry name" value="Zn_ribbon_GRF"/>
    <property type="match status" value="1"/>
</dbReference>
<dbReference type="SMART" id="SM00479">
    <property type="entry name" value="EXOIII"/>
    <property type="match status" value="1"/>
</dbReference>
<dbReference type="SUPFAM" id="SSF53098">
    <property type="entry name" value="Ribonuclease H-like"/>
    <property type="match status" value="1"/>
</dbReference>
<dbReference type="PROSITE" id="PS51999">
    <property type="entry name" value="ZF_GRF"/>
    <property type="match status" value="1"/>
</dbReference>
<feature type="chain" id="PRO_0000338974" description="ERI1 exoribonuclease 2">
    <location>
        <begin position="1"/>
        <end position="688"/>
    </location>
</feature>
<feature type="domain" description="Exonuclease">
    <location>
        <begin position="37"/>
        <end position="226"/>
    </location>
</feature>
<feature type="zinc finger region" description="GRF-type" evidence="3">
    <location>
        <begin position="594"/>
        <end position="640"/>
    </location>
</feature>
<feature type="region of interest" description="Disordered" evidence="4">
    <location>
        <begin position="337"/>
        <end position="367"/>
    </location>
</feature>
<feature type="region of interest" description="Disordered" evidence="4">
    <location>
        <begin position="523"/>
        <end position="546"/>
    </location>
</feature>
<feature type="compositionally biased region" description="Polar residues" evidence="4">
    <location>
        <begin position="337"/>
        <end position="360"/>
    </location>
</feature>
<feature type="active site" description="Proton acceptor" evidence="2">
    <location>
        <position position="43"/>
    </location>
</feature>
<feature type="active site" description="Proton acceptor" evidence="2">
    <location>
        <position position="213"/>
    </location>
</feature>
<feature type="binding site" evidence="1">
    <location>
        <position position="41"/>
    </location>
    <ligand>
        <name>Mg(2+)</name>
        <dbReference type="ChEBI" id="CHEBI:18420"/>
        <label>1</label>
    </ligand>
</feature>
<feature type="binding site" evidence="1">
    <location>
        <position position="41"/>
    </location>
    <ligand>
        <name>Mg(2+)</name>
        <dbReference type="ChEBI" id="CHEBI:18420"/>
        <label>2</label>
    </ligand>
</feature>
<feature type="binding site" evidence="1">
    <location>
        <position position="43"/>
    </location>
    <ligand>
        <name>AMP</name>
        <dbReference type="ChEBI" id="CHEBI:456215"/>
    </ligand>
</feature>
<feature type="binding site" evidence="1">
    <location>
        <position position="43"/>
    </location>
    <ligand>
        <name>Mg(2+)</name>
        <dbReference type="ChEBI" id="CHEBI:18420"/>
        <label>1</label>
    </ligand>
</feature>
<feature type="binding site" evidence="1">
    <location>
        <position position="156"/>
    </location>
    <ligand>
        <name>Mg(2+)</name>
        <dbReference type="ChEBI" id="CHEBI:18420"/>
        <label>2</label>
    </ligand>
</feature>
<feature type="binding site" evidence="1">
    <location>
        <position position="213"/>
    </location>
    <ligand>
        <name>AMP</name>
        <dbReference type="ChEBI" id="CHEBI:456215"/>
    </ligand>
</feature>
<feature type="binding site" evidence="1">
    <location>
        <position position="218"/>
    </location>
    <ligand>
        <name>Mg(2+)</name>
        <dbReference type="ChEBI" id="CHEBI:18420"/>
        <label>1</label>
    </ligand>
</feature>
<feature type="binding site" evidence="3">
    <location>
        <position position="594"/>
    </location>
    <ligand>
        <name>Zn(2+)</name>
        <dbReference type="ChEBI" id="CHEBI:29105"/>
    </ligand>
</feature>
<feature type="binding site" evidence="3">
    <location>
        <position position="596"/>
    </location>
    <ligand>
        <name>Zn(2+)</name>
        <dbReference type="ChEBI" id="CHEBI:29105"/>
    </ligand>
</feature>
<feature type="binding site" evidence="3">
    <location>
        <position position="619"/>
    </location>
    <ligand>
        <name>Zn(2+)</name>
        <dbReference type="ChEBI" id="CHEBI:29105"/>
    </ligand>
</feature>
<feature type="binding site" evidence="3">
    <location>
        <position position="631"/>
    </location>
    <ligand>
        <name>Zn(2+)</name>
        <dbReference type="ChEBI" id="CHEBI:29105"/>
    </ligand>
</feature>
<feature type="sequence conflict" description="In Ref. 1; BAC26269." evidence="5" ref="1">
    <original>D</original>
    <variation>N</variation>
    <location>
        <position position="232"/>
    </location>
</feature>
<comment type="cofactor">
    <cofactor evidence="1">
        <name>Mg(2+)</name>
        <dbReference type="ChEBI" id="CHEBI:18420"/>
    </cofactor>
    <text evidence="1">Binds 2 magnesium ions per subunit.</text>
</comment>
<comment type="similarity">
    <text evidence="5">Belongs to the ERI2 family.</text>
</comment>
<protein>
    <recommendedName>
        <fullName>ERI1 exoribonuclease 2</fullName>
        <ecNumber>3.1.-.-</ecNumber>
    </recommendedName>
    <alternativeName>
        <fullName>Exonuclease domain-containing protein 1</fullName>
    </alternativeName>
</protein>
<organism>
    <name type="scientific">Mus musculus</name>
    <name type="common">Mouse</name>
    <dbReference type="NCBI Taxonomy" id="10090"/>
    <lineage>
        <taxon>Eukaryota</taxon>
        <taxon>Metazoa</taxon>
        <taxon>Chordata</taxon>
        <taxon>Craniata</taxon>
        <taxon>Vertebrata</taxon>
        <taxon>Euteleostomi</taxon>
        <taxon>Mammalia</taxon>
        <taxon>Eutheria</taxon>
        <taxon>Euarchontoglires</taxon>
        <taxon>Glires</taxon>
        <taxon>Rodentia</taxon>
        <taxon>Myomorpha</taxon>
        <taxon>Muroidea</taxon>
        <taxon>Muridae</taxon>
        <taxon>Murinae</taxon>
        <taxon>Mus</taxon>
        <taxon>Mus</taxon>
    </lineage>
</organism>
<sequence>MATKRLARRLGLIRRKSVTPASGNPGGSRLKQLYAYLIVVDFESTCWNDGKHHSSPEIIEFPAVLLNTATGEIESEFHAYVQPQEHPILSEFCTELTGIKQVQVDEGVPLKICLSQFCKWIHKLQQQQTISFAAGDSEPSTSEVKLCAFVTWSDWDLGVCLEYECRRKQLLKPVFLNSWIDLRATYRLFYKRKPKGLSGALQEVGIEFSGREHSGLDDSRNTALLAWKMIRDGCLMKITRSLNKVLTKKNPKILARNLGTDQVEEAATCNMSIQGPSIYQKELQSTVNAEENAQMNSVCVNSSCIKGQLQPKSNMKADLYNIRHSFPLFTTKSSTSVDQLHSPTLNPPLTMQKPSKSDQLALNDSSKSSTLNSNLVLVSTTIPSVNHVSDVEMGHTFDCLPMLAEWEDVVLLPASQAEPDTDCMPPVSDTNVSTSLNSAERSLVPEEPETLSYENFEDLQETPQNSETSKSIVYKSPHSTVYDVKGAKHPGSDASAFKLPKCKPFPFTSVHASAAYPSVLRKDPLLSGGTKRNSLSPPASPRTKRQTFTIHEEKPTSSICSPGTTSCRVSPSVLTSTVNLQEPWKTGKMTPPLCKCGRRSKRLIVSNNGPNHGKAFYCCPVGKYQQDRKCCGYFKWEQTLQKERTNGKALSHSSEGLTFSSPETSRIHDRNLSFPIKNSLRLRPSMRH</sequence>